<feature type="signal peptide" description="Tat-type signal" evidence="1">
    <location>
        <begin position="1"/>
        <end position="44"/>
    </location>
</feature>
<feature type="chain" id="PRO_1000138723" description="Protein-methionine-sulfoxide reductase catalytic subunit MsrP" evidence="1">
    <location>
        <begin position="45"/>
        <end position="334"/>
    </location>
</feature>
<feature type="binding site" evidence="1">
    <location>
        <position position="88"/>
    </location>
    <ligand>
        <name>Mo-molybdopterin</name>
        <dbReference type="ChEBI" id="CHEBI:71302"/>
    </ligand>
</feature>
<feature type="binding site" evidence="1">
    <location>
        <begin position="91"/>
        <end position="92"/>
    </location>
    <ligand>
        <name>Mo-molybdopterin</name>
        <dbReference type="ChEBI" id="CHEBI:71302"/>
    </ligand>
</feature>
<feature type="binding site" evidence="1">
    <location>
        <position position="146"/>
    </location>
    <ligand>
        <name>Mo-molybdopterin</name>
        <dbReference type="ChEBI" id="CHEBI:71302"/>
    </ligand>
    <ligandPart>
        <name>Mo</name>
        <dbReference type="ChEBI" id="CHEBI:28685"/>
    </ligandPart>
</feature>
<feature type="binding site" evidence="1">
    <location>
        <position position="181"/>
    </location>
    <ligand>
        <name>Mo-molybdopterin</name>
        <dbReference type="ChEBI" id="CHEBI:71302"/>
    </ligand>
</feature>
<feature type="binding site" evidence="1">
    <location>
        <position position="233"/>
    </location>
    <ligand>
        <name>Mo-molybdopterin</name>
        <dbReference type="ChEBI" id="CHEBI:71302"/>
    </ligand>
</feature>
<feature type="binding site" evidence="1">
    <location>
        <position position="238"/>
    </location>
    <ligand>
        <name>Mo-molybdopterin</name>
        <dbReference type="ChEBI" id="CHEBI:71302"/>
    </ligand>
</feature>
<feature type="binding site" evidence="1">
    <location>
        <begin position="249"/>
        <end position="251"/>
    </location>
    <ligand>
        <name>Mo-molybdopterin</name>
        <dbReference type="ChEBI" id="CHEBI:71302"/>
    </ligand>
</feature>
<sequence length="334" mass="37492">MKKIRPLTEADVTAESAFFMQRRQVLKALGISAAALSLPSTAQADLFSWFKGNDRPKAPAGKPLEFSQPAAWRSDLALTPEDKVTGYNNFYEFGLDKADPAANAGSLKTEPWTLKISGEVAKPFTLDYDDLTHRFPLEERIYRMRCVEAWSMVVPWIGFPLYKLLAQAQPTSHAKYVAFETLYAPDDMPGQKDRFIGGGLKYPYVEGLRLDEAMHPLTLMTVGVYGKALPPQNGAPIRLIVPWKYGFKGIKSIVSIKLTRERPPTTWNLSAPNEYGFYANVNPHVDHPRWSQATERFIGSGGILDVQRQPTLLFNGYANEVASLYRGLNLRENF</sequence>
<comment type="function">
    <text evidence="1">Part of the MsrPQ system that repairs oxidized periplasmic proteins containing methionine sulfoxide residues (Met-O), using respiratory chain electrons. Thus protects these proteins from oxidative-stress damage caused by reactive species of oxygen and chlorine generated by the host defense mechanisms. MsrPQ is essential for the maintenance of envelope integrity under bleach stress, rescuing a wide series of structurally unrelated periplasmic proteins from methionine oxidation, including the primary periplasmic chaperone SurA and the lipoprotein Pal. The catalytic subunit MsrP is non-stereospecific, being able to reduce both (R-) and (S-) diastereoisomers of methionine sulfoxide.</text>
</comment>
<comment type="catalytic activity">
    <reaction evidence="1">
        <text>L-methionyl-[protein] + a quinone + H2O = L-methionyl-(S)-S-oxide-[protein] + a quinol</text>
        <dbReference type="Rhea" id="RHEA:51292"/>
        <dbReference type="Rhea" id="RHEA-COMP:12313"/>
        <dbReference type="Rhea" id="RHEA-COMP:12315"/>
        <dbReference type="ChEBI" id="CHEBI:15377"/>
        <dbReference type="ChEBI" id="CHEBI:16044"/>
        <dbReference type="ChEBI" id="CHEBI:24646"/>
        <dbReference type="ChEBI" id="CHEBI:44120"/>
        <dbReference type="ChEBI" id="CHEBI:132124"/>
    </reaction>
</comment>
<comment type="catalytic activity">
    <reaction evidence="1">
        <text>L-methionyl-[protein] + a quinone + H2O = L-methionyl-(R)-S-oxide-[protein] + a quinol</text>
        <dbReference type="Rhea" id="RHEA:51296"/>
        <dbReference type="Rhea" id="RHEA-COMP:12313"/>
        <dbReference type="Rhea" id="RHEA-COMP:12314"/>
        <dbReference type="ChEBI" id="CHEBI:15377"/>
        <dbReference type="ChEBI" id="CHEBI:16044"/>
        <dbReference type="ChEBI" id="CHEBI:24646"/>
        <dbReference type="ChEBI" id="CHEBI:45764"/>
        <dbReference type="ChEBI" id="CHEBI:132124"/>
    </reaction>
</comment>
<comment type="cofactor">
    <cofactor evidence="1">
        <name>Mo-molybdopterin</name>
        <dbReference type="ChEBI" id="CHEBI:71302"/>
    </cofactor>
    <text evidence="1">Binds 1 Mo-molybdopterin (Mo-MPT) cofactor per subunit.</text>
</comment>
<comment type="subunit">
    <text evidence="1">Heterodimer of a catalytic subunit (MsrP) and a heme-binding subunit (MsrQ).</text>
</comment>
<comment type="subcellular location">
    <subcellularLocation>
        <location evidence="1">Periplasm</location>
    </subcellularLocation>
    <text evidence="1">Is attached to the inner membrane when interacting with the MsrQ subunit.</text>
</comment>
<comment type="PTM">
    <text evidence="1">Predicted to be exported by the Tat system. The position of the signal peptide cleavage has not been experimentally proven.</text>
</comment>
<comment type="similarity">
    <text evidence="1">Belongs to the MsrP family.</text>
</comment>
<organism>
    <name type="scientific">Salmonella newport (strain SL254)</name>
    <dbReference type="NCBI Taxonomy" id="423368"/>
    <lineage>
        <taxon>Bacteria</taxon>
        <taxon>Pseudomonadati</taxon>
        <taxon>Pseudomonadota</taxon>
        <taxon>Gammaproteobacteria</taxon>
        <taxon>Enterobacterales</taxon>
        <taxon>Enterobacteriaceae</taxon>
        <taxon>Salmonella</taxon>
    </lineage>
</organism>
<accession>B4SUN2</accession>
<dbReference type="EC" id="1.8.5.-" evidence="1"/>
<dbReference type="EMBL" id="CP001113">
    <property type="protein sequence ID" value="ACF64022.1"/>
    <property type="molecule type" value="Genomic_DNA"/>
</dbReference>
<dbReference type="RefSeq" id="WP_000723876.1">
    <property type="nucleotide sequence ID" value="NZ_CCMR01000001.1"/>
</dbReference>
<dbReference type="SMR" id="B4SUN2"/>
<dbReference type="KEGG" id="see:SNSL254_A3640"/>
<dbReference type="HOGENOM" id="CLU_045520_0_0_6"/>
<dbReference type="Proteomes" id="UP000008824">
    <property type="component" value="Chromosome"/>
</dbReference>
<dbReference type="GO" id="GO:0042597">
    <property type="term" value="C:periplasmic space"/>
    <property type="evidence" value="ECO:0007669"/>
    <property type="project" value="UniProtKB-SubCell"/>
</dbReference>
<dbReference type="GO" id="GO:0046872">
    <property type="term" value="F:metal ion binding"/>
    <property type="evidence" value="ECO:0007669"/>
    <property type="project" value="UniProtKB-KW"/>
</dbReference>
<dbReference type="GO" id="GO:0043546">
    <property type="term" value="F:molybdopterin cofactor binding"/>
    <property type="evidence" value="ECO:0007669"/>
    <property type="project" value="UniProtKB-UniRule"/>
</dbReference>
<dbReference type="GO" id="GO:0016672">
    <property type="term" value="F:oxidoreductase activity, acting on a sulfur group of donors, quinone or similar compound as acceptor"/>
    <property type="evidence" value="ECO:0007669"/>
    <property type="project" value="UniProtKB-UniRule"/>
</dbReference>
<dbReference type="GO" id="GO:0030091">
    <property type="term" value="P:protein repair"/>
    <property type="evidence" value="ECO:0007669"/>
    <property type="project" value="UniProtKB-UniRule"/>
</dbReference>
<dbReference type="CDD" id="cd02107">
    <property type="entry name" value="YedY_like_Moco"/>
    <property type="match status" value="1"/>
</dbReference>
<dbReference type="FunFam" id="3.90.420.10:FF:000001">
    <property type="entry name" value="Protein-methionine-sulfoxide reductase catalytic subunit MsrP"/>
    <property type="match status" value="1"/>
</dbReference>
<dbReference type="Gene3D" id="3.90.420.10">
    <property type="entry name" value="Oxidoreductase, molybdopterin-binding domain"/>
    <property type="match status" value="1"/>
</dbReference>
<dbReference type="HAMAP" id="MF_01206">
    <property type="entry name" value="MsrP"/>
    <property type="match status" value="1"/>
</dbReference>
<dbReference type="InterPro" id="IPR022867">
    <property type="entry name" value="MsrP"/>
</dbReference>
<dbReference type="InterPro" id="IPR000572">
    <property type="entry name" value="OxRdtase_Mopterin-bd_dom"/>
</dbReference>
<dbReference type="InterPro" id="IPR036374">
    <property type="entry name" value="OxRdtase_Mopterin-bd_sf"/>
</dbReference>
<dbReference type="InterPro" id="IPR006311">
    <property type="entry name" value="TAT_signal"/>
</dbReference>
<dbReference type="NCBIfam" id="NF003767">
    <property type="entry name" value="PRK05363.1"/>
    <property type="match status" value="1"/>
</dbReference>
<dbReference type="PANTHER" id="PTHR43032">
    <property type="entry name" value="PROTEIN-METHIONINE-SULFOXIDE REDUCTASE"/>
    <property type="match status" value="1"/>
</dbReference>
<dbReference type="PANTHER" id="PTHR43032:SF3">
    <property type="entry name" value="PROTEIN-METHIONINE-SULFOXIDE REDUCTASE CATALYTIC SUBUNIT MSRP"/>
    <property type="match status" value="1"/>
</dbReference>
<dbReference type="Pfam" id="PF00174">
    <property type="entry name" value="Oxidored_molyb"/>
    <property type="match status" value="1"/>
</dbReference>
<dbReference type="SUPFAM" id="SSF56524">
    <property type="entry name" value="Oxidoreductase molybdopterin-binding domain"/>
    <property type="match status" value="1"/>
</dbReference>
<dbReference type="PROSITE" id="PS51318">
    <property type="entry name" value="TAT"/>
    <property type="match status" value="1"/>
</dbReference>
<evidence type="ECO:0000255" key="1">
    <source>
        <dbReference type="HAMAP-Rule" id="MF_01206"/>
    </source>
</evidence>
<reference key="1">
    <citation type="journal article" date="2011" name="J. Bacteriol.">
        <title>Comparative genomics of 28 Salmonella enterica isolates: evidence for CRISPR-mediated adaptive sublineage evolution.</title>
        <authorList>
            <person name="Fricke W.F."/>
            <person name="Mammel M.K."/>
            <person name="McDermott P.F."/>
            <person name="Tartera C."/>
            <person name="White D.G."/>
            <person name="Leclerc J.E."/>
            <person name="Ravel J."/>
            <person name="Cebula T.A."/>
        </authorList>
    </citation>
    <scope>NUCLEOTIDE SEQUENCE [LARGE SCALE GENOMIC DNA]</scope>
    <source>
        <strain>SL254</strain>
    </source>
</reference>
<name>MSRP_SALNS</name>
<gene>
    <name evidence="1" type="primary">msrP</name>
    <name type="ordered locus">SNSL254_A3640</name>
</gene>
<keyword id="KW-0479">Metal-binding</keyword>
<keyword id="KW-0500">Molybdenum</keyword>
<keyword id="KW-0560">Oxidoreductase</keyword>
<keyword id="KW-0574">Periplasm</keyword>
<keyword id="KW-0732">Signal</keyword>
<protein>
    <recommendedName>
        <fullName evidence="1">Protein-methionine-sulfoxide reductase catalytic subunit MsrP</fullName>
        <ecNumber evidence="1">1.8.5.-</ecNumber>
    </recommendedName>
</protein>
<proteinExistence type="inferred from homology"/>